<organism>
    <name type="scientific">Homo sapiens</name>
    <name type="common">Human</name>
    <dbReference type="NCBI Taxonomy" id="9606"/>
    <lineage>
        <taxon>Eukaryota</taxon>
        <taxon>Metazoa</taxon>
        <taxon>Chordata</taxon>
        <taxon>Craniata</taxon>
        <taxon>Vertebrata</taxon>
        <taxon>Euteleostomi</taxon>
        <taxon>Mammalia</taxon>
        <taxon>Eutheria</taxon>
        <taxon>Euarchontoglires</taxon>
        <taxon>Primates</taxon>
        <taxon>Haplorrhini</taxon>
        <taxon>Catarrhini</taxon>
        <taxon>Hominidae</taxon>
        <taxon>Homo</taxon>
    </lineage>
</organism>
<keyword id="KW-0002">3D-structure</keyword>
<keyword id="KW-0007">Acetylation</keyword>
<keyword id="KW-0013">ADP-ribosylation</keyword>
<keyword id="KW-0963">Cytoplasm</keyword>
<keyword id="KW-0903">Direct protein sequencing</keyword>
<keyword id="KW-0225">Disease variant</keyword>
<keyword id="KW-0325">Glycoprotein</keyword>
<keyword id="KW-0342">GTP-binding</keyword>
<keyword id="KW-0378">Hydrolase</keyword>
<keyword id="KW-0449">Lipoprotein</keyword>
<keyword id="KW-0488">Methylation</keyword>
<keyword id="KW-0547">Nucleotide-binding</keyword>
<keyword id="KW-0636">Prenylation</keyword>
<keyword id="KW-1267">Proteomics identification</keyword>
<keyword id="KW-1185">Reference proteome</keyword>
<comment type="function">
    <text evidence="7 14">Plasma membrane-associated small GTPase which cycles between an active GTP-bound and inactive GDP-bound state (PubMed:30723080). In its active state, binds to a variety of effector proteins to regulate cellular responses, such as secretory processes, phagocytose of apoptotic cells and epithelial cell polarization. Regulatory subunit of the phagocyte NADPH oxidase complex that mediates the transfer of electrons from cytosolic NADPH to O2 to produce the superoxide anion (O2(-)) (PubMed:1660188).</text>
</comment>
<comment type="catalytic activity">
    <reaction evidence="14">
        <text>GTP + H2O = GDP + phosphate + H(+)</text>
        <dbReference type="Rhea" id="RHEA:19669"/>
        <dbReference type="ChEBI" id="CHEBI:15377"/>
        <dbReference type="ChEBI" id="CHEBI:15378"/>
        <dbReference type="ChEBI" id="CHEBI:37565"/>
        <dbReference type="ChEBI" id="CHEBI:43474"/>
        <dbReference type="ChEBI" id="CHEBI:58189"/>
        <dbReference type="EC" id="3.6.5.2"/>
    </reaction>
    <physiologicalReaction direction="left-to-right" evidence="18">
        <dbReference type="Rhea" id="RHEA:19670"/>
    </physiologicalReaction>
</comment>
<comment type="activity regulation">
    <text evidence="14">Regulated by guanine nucleotide exchange factors (GEFs) which promote the exchange of bound GDP for free GTP, GTPase activating proteins (GAPs) which increase the GTP hydrolysis activity, and GDP dissociation inhibitors which inhibit the dissociation of the nucleotide from the GTPase.</text>
</comment>
<comment type="subunit">
    <text evidence="2 4 6 9 13 14">Interacts with DOCK2, which may activate it. Interacts with S100A8 and calprotectin (S100A8/9) (PubMed:10559471, PubMed:15642721). Found in a complex with SH3RF1, MAP3K7/TAK1, MAP2K7/MKK7, MAPK8IP1/JIP1, MAPK8/JNK1 and MAPK9/JNK2 (By similarity). Interacts with PAK1 (PubMed:30654050, PubMed:30723080). Component of the phagocyte NADPH oxidase complex composed of an obligatory core heterodimer formed by the membrane proteins CYBA and CYBB and the cytosolic regulatory subunits NCF1/p47-phox, NCF2/p67-phox, NCF4/p40-phox and the small GTPase RAC1 or RAC2 (PubMed:19028840).</text>
</comment>
<comment type="interaction">
    <interactant intactId="EBI-489652">
        <id>P15153</id>
    </interactant>
    <interactant intactId="EBI-638194">
        <id>P53365</id>
        <label>ARFIP2</label>
    </interactant>
    <organismsDiffer>false</organismsDiffer>
    <experiments>3</experiments>
</comment>
<comment type="interaction">
    <interactant intactId="EBI-489652">
        <id>P15153</id>
    </interactant>
    <interactant intactId="EBI-12094670">
        <id>Q8WUI4-6</id>
        <label>HDAC7</label>
    </interactant>
    <organismsDiffer>false</organismsDiffer>
    <experiments>3</experiments>
</comment>
<comment type="interaction">
    <interactant intactId="EBI-489652">
        <id>P15153</id>
    </interactant>
    <interactant intactId="EBI-1053996">
        <id>O14939</id>
        <label>PLD2</label>
    </interactant>
    <organismsDiffer>false</organismsDiffer>
    <experiments>4</experiments>
</comment>
<comment type="interaction">
    <interactant intactId="EBI-489652">
        <id>P15153</id>
    </interactant>
    <interactant intactId="EBI-9073209">
        <id>Q6P589</id>
        <label>TNFAIP8L2</label>
    </interactant>
    <organismsDiffer>false</organismsDiffer>
    <experiments>2</experiments>
</comment>
<comment type="subcellular location">
    <subcellularLocation>
        <location>Cytoplasm</location>
    </subcellularLocation>
    <text>Membrane-associated when activated.</text>
</comment>
<comment type="tissue specificity">
    <text>Hematopoietic specific.</text>
</comment>
<comment type="PTM">
    <text evidence="11">(Microbial infection) Glycosylated at Tyr-32 by Photorhabdus asymbiotica toxin PAU_02230. Mono-O-GlcNAcylation by PAU_02230 inhibits downstream signaling by an impaired interaction with diverse regulator and effector proteins of Rac and leads to actin disassembly.</text>
</comment>
<comment type="disease" evidence="5">
    <disease id="DI-02051">
        <name>Immunodeficiency 73A with defective neutrophil chemotaxis and leukocytosis</name>
        <acronym>IMD73A</acronym>
        <description>An autosomal dominant immunologic disorder characterized by onset of recurrent infections in early infancy, leukocytosis, neutrophilia, invasive infections, and poor wound healing.</description>
        <dbReference type="MIM" id="608203"/>
    </disease>
    <text>The disease is caused by variants affecting the gene represented in this entry.</text>
</comment>
<comment type="disease" evidence="13 14 15 16">
    <disease id="DI-05898">
        <name>Immunodeficiency 73B with defective neutrophil chemotaxis and lymphopenia</name>
        <acronym>IMD73B</acronym>
        <description>An autosomal dominant immunologic disorder characterized by respiratory infections, cellulitis, severe invasive infections, B- and T-cell lymphopenia, and impaired neutrophil chemotaxis. Disease onset is in infancy or early childhood.</description>
        <dbReference type="MIM" id="618986"/>
    </disease>
    <text>The disease is caused by variants affecting the gene represented in this entry.</text>
</comment>
<comment type="disease" evidence="12">
    <disease id="DI-05899">
        <name>Immunodeficiency 73C with defective neutrophil chemotaxis and hypogammaglobulinemia</name>
        <acronym>IMD73C</acronym>
        <description>An autosomal recessive immunologic disorder characterized by recurrent respiratory infections, decreased B cells, hypogammaglobulinemia, and impaired neutrophil chemotaxis. Variable features are urticaria, recurrent erythematous plaques, food allergy, arthralgia, bronchiectasis, and lymphadenopathy. In addition, patients suffer from glomerulonephritis, coagulopathy, multiple hormone deficiencies, and abnormalities of neutrophil granules.</description>
        <dbReference type="MIM" id="618987"/>
    </disease>
    <text>The disease is caused by variants affecting the gene represented in this entry.</text>
</comment>
<comment type="similarity">
    <text evidence="17">Belongs to the small GTPase superfamily. Rho family.</text>
</comment>
<comment type="online information" name="Atlas of Genetics and Cytogenetics in Oncology and Haematology">
    <link uri="https://atlasgeneticsoncology.org/gene/42021/RAC2"/>
</comment>
<comment type="online information" name="RAC2base">
    <link uri="https://databases.lovd.nl/shared/genes/RAC2"/>
    <text>RAC2 mutation db</text>
</comment>
<protein>
    <recommendedName>
        <fullName evidence="17">Ras-related C3 botulinum toxin substrate 2</fullName>
        <ecNumber evidence="14">3.6.5.2</ecNumber>
    </recommendedName>
    <alternativeName>
        <fullName>GX</fullName>
    </alternativeName>
    <alternativeName>
        <fullName>Small G protein</fullName>
    </alternativeName>
    <alternativeName>
        <fullName>p21-Rac2</fullName>
    </alternativeName>
</protein>
<evidence type="ECO:0000250" key="1"/>
<evidence type="ECO:0000250" key="2">
    <source>
        <dbReference type="UniProtKB" id="Q05144"/>
    </source>
</evidence>
<evidence type="ECO:0000255" key="3"/>
<evidence type="ECO:0000269" key="4">
    <source>
    </source>
</evidence>
<evidence type="ECO:0000269" key="5">
    <source>
    </source>
</evidence>
<evidence type="ECO:0000269" key="6">
    <source>
    </source>
</evidence>
<evidence type="ECO:0000269" key="7">
    <source>
    </source>
</evidence>
<evidence type="ECO:0000269" key="8">
    <source>
    </source>
</evidence>
<evidence type="ECO:0000269" key="9">
    <source>
    </source>
</evidence>
<evidence type="ECO:0000269" key="10">
    <source>
    </source>
</evidence>
<evidence type="ECO:0000269" key="11">
    <source>
    </source>
</evidence>
<evidence type="ECO:0000269" key="12">
    <source>
    </source>
</evidence>
<evidence type="ECO:0000269" key="13">
    <source>
    </source>
</evidence>
<evidence type="ECO:0000269" key="14">
    <source>
    </source>
</evidence>
<evidence type="ECO:0000269" key="15">
    <source>
    </source>
</evidence>
<evidence type="ECO:0000269" key="16">
    <source>
    </source>
</evidence>
<evidence type="ECO:0000305" key="17"/>
<evidence type="ECO:0000305" key="18">
    <source>
    </source>
</evidence>
<evidence type="ECO:0000312" key="19">
    <source>
        <dbReference type="HGNC" id="HGNC:9802"/>
    </source>
</evidence>
<evidence type="ECO:0007744" key="20">
    <source>
    </source>
</evidence>
<evidence type="ECO:0007829" key="21">
    <source>
        <dbReference type="PDB" id="2W2T"/>
    </source>
</evidence>
<reference key="1">
    <citation type="journal article" date="1989" name="J. Biol. Chem.">
        <title>Rac, a novel ras-related family of proteins that are botulinum toxin substrates.</title>
        <authorList>
            <person name="Didsbury J."/>
            <person name="Weber R.F."/>
            <person name="Bokoch G.M."/>
            <person name="Evans T."/>
            <person name="Snyderman R."/>
        </authorList>
    </citation>
    <scope>NUCLEOTIDE SEQUENCE [MRNA]</scope>
</reference>
<reference key="2">
    <citation type="submission" date="2002-04" db="EMBL/GenBank/DDBJ databases">
        <title>cDNA clones of human proteins involved in signal transduction sequenced by the Guthrie cDNA resource center (www.cdna.org).</title>
        <authorList>
            <person name="Puhl H.L. III"/>
            <person name="Ikeda S.R."/>
            <person name="Aronstam R.S."/>
        </authorList>
    </citation>
    <scope>NUCLEOTIDE SEQUENCE [LARGE SCALE MRNA]</scope>
</reference>
<reference key="3">
    <citation type="journal article" date="2004" name="Genome Biol.">
        <title>A genome annotation-driven approach to cloning the human ORFeome.</title>
        <authorList>
            <person name="Collins J.E."/>
            <person name="Wright C.L."/>
            <person name="Edwards C.A."/>
            <person name="Davis M.P."/>
            <person name="Grinham J.A."/>
            <person name="Cole C.G."/>
            <person name="Goward M.E."/>
            <person name="Aguado B."/>
            <person name="Mallya M."/>
            <person name="Mokrab Y."/>
            <person name="Huckle E.J."/>
            <person name="Beare D.M."/>
            <person name="Dunham I."/>
        </authorList>
    </citation>
    <scope>NUCLEOTIDE SEQUENCE [LARGE SCALE MRNA]</scope>
</reference>
<reference key="4">
    <citation type="submission" date="2004-10" db="EMBL/GenBank/DDBJ databases">
        <title>Cloning of human full-length CDSs in BD Creator(TM) system donor vector.</title>
        <authorList>
            <person name="Kalnine N."/>
            <person name="Chen X."/>
            <person name="Rolfs A."/>
            <person name="Halleck A."/>
            <person name="Hines L."/>
            <person name="Eisenstein S."/>
            <person name="Koundinya M."/>
            <person name="Raphael J."/>
            <person name="Moreira D."/>
            <person name="Kelley T."/>
            <person name="LaBaer J."/>
            <person name="Lin Y."/>
            <person name="Phelan M."/>
            <person name="Farmer A."/>
        </authorList>
    </citation>
    <scope>NUCLEOTIDE SEQUENCE [LARGE SCALE MRNA]</scope>
</reference>
<reference key="5">
    <citation type="journal article" date="1999" name="Nature">
        <title>The DNA sequence of human chromosome 22.</title>
        <authorList>
            <person name="Dunham I."/>
            <person name="Hunt A.R."/>
            <person name="Collins J.E."/>
            <person name="Bruskiewich R."/>
            <person name="Beare D.M."/>
            <person name="Clamp M."/>
            <person name="Smink L.J."/>
            <person name="Ainscough R."/>
            <person name="Almeida J.P."/>
            <person name="Babbage A.K."/>
            <person name="Bagguley C."/>
            <person name="Bailey J."/>
            <person name="Barlow K.F."/>
            <person name="Bates K.N."/>
            <person name="Beasley O.P."/>
            <person name="Bird C.P."/>
            <person name="Blakey S.E."/>
            <person name="Bridgeman A.M."/>
            <person name="Buck D."/>
            <person name="Burgess J."/>
            <person name="Burrill W.D."/>
            <person name="Burton J."/>
            <person name="Carder C."/>
            <person name="Carter N.P."/>
            <person name="Chen Y."/>
            <person name="Clark G."/>
            <person name="Clegg S.M."/>
            <person name="Cobley V.E."/>
            <person name="Cole C.G."/>
            <person name="Collier R.E."/>
            <person name="Connor R."/>
            <person name="Conroy D."/>
            <person name="Corby N.R."/>
            <person name="Coville G.J."/>
            <person name="Cox A.V."/>
            <person name="Davis J."/>
            <person name="Dawson E."/>
            <person name="Dhami P.D."/>
            <person name="Dockree C."/>
            <person name="Dodsworth S.J."/>
            <person name="Durbin R.M."/>
            <person name="Ellington A.G."/>
            <person name="Evans K.L."/>
            <person name="Fey J.M."/>
            <person name="Fleming K."/>
            <person name="French L."/>
            <person name="Garner A.A."/>
            <person name="Gilbert J.G.R."/>
            <person name="Goward M.E."/>
            <person name="Grafham D.V."/>
            <person name="Griffiths M.N.D."/>
            <person name="Hall C."/>
            <person name="Hall R.E."/>
            <person name="Hall-Tamlyn G."/>
            <person name="Heathcott R.W."/>
            <person name="Ho S."/>
            <person name="Holmes S."/>
            <person name="Hunt S.E."/>
            <person name="Jones M.C."/>
            <person name="Kershaw J."/>
            <person name="Kimberley A.M."/>
            <person name="King A."/>
            <person name="Laird G.K."/>
            <person name="Langford C.F."/>
            <person name="Leversha M.A."/>
            <person name="Lloyd C."/>
            <person name="Lloyd D.M."/>
            <person name="Martyn I.D."/>
            <person name="Mashreghi-Mohammadi M."/>
            <person name="Matthews L.H."/>
            <person name="Mccann O.T."/>
            <person name="Mcclay J."/>
            <person name="Mclaren S."/>
            <person name="McMurray A.A."/>
            <person name="Milne S.A."/>
            <person name="Mortimore B.J."/>
            <person name="Odell C.N."/>
            <person name="Pavitt R."/>
            <person name="Pearce A.V."/>
            <person name="Pearson D."/>
            <person name="Phillimore B.J.C.T."/>
            <person name="Phillips S.H."/>
            <person name="Plumb R.W."/>
            <person name="Ramsay H."/>
            <person name="Ramsey Y."/>
            <person name="Rogers L."/>
            <person name="Ross M.T."/>
            <person name="Scott C.E."/>
            <person name="Sehra H.K."/>
            <person name="Skuce C.D."/>
            <person name="Smalley S."/>
            <person name="Smith M.L."/>
            <person name="Soderlund C."/>
            <person name="Spragon L."/>
            <person name="Steward C.A."/>
            <person name="Sulston J.E."/>
            <person name="Swann R.M."/>
            <person name="Vaudin M."/>
            <person name="Wall M."/>
            <person name="Wallis J.M."/>
            <person name="Whiteley M.N."/>
            <person name="Willey D.L."/>
            <person name="Williams L."/>
            <person name="Williams S.A."/>
            <person name="Williamson H."/>
            <person name="Wilmer T.E."/>
            <person name="Wilming L."/>
            <person name="Wright C.L."/>
            <person name="Hubbard T."/>
            <person name="Bentley D.R."/>
            <person name="Beck S."/>
            <person name="Rogers J."/>
            <person name="Shimizu N."/>
            <person name="Minoshima S."/>
            <person name="Kawasaki K."/>
            <person name="Sasaki T."/>
            <person name="Asakawa S."/>
            <person name="Kudoh J."/>
            <person name="Shintani A."/>
            <person name="Shibuya K."/>
            <person name="Yoshizaki Y."/>
            <person name="Aoki N."/>
            <person name="Mitsuyama S."/>
            <person name="Roe B.A."/>
            <person name="Chen F."/>
            <person name="Chu L."/>
            <person name="Crabtree J."/>
            <person name="Deschamps S."/>
            <person name="Do A."/>
            <person name="Do T."/>
            <person name="Dorman A."/>
            <person name="Fang F."/>
            <person name="Fu Y."/>
            <person name="Hu P."/>
            <person name="Hua A."/>
            <person name="Kenton S."/>
            <person name="Lai H."/>
            <person name="Lao H.I."/>
            <person name="Lewis J."/>
            <person name="Lewis S."/>
            <person name="Lin S.-P."/>
            <person name="Loh P."/>
            <person name="Malaj E."/>
            <person name="Nguyen T."/>
            <person name="Pan H."/>
            <person name="Phan S."/>
            <person name="Qi S."/>
            <person name="Qian Y."/>
            <person name="Ray L."/>
            <person name="Ren Q."/>
            <person name="Shaull S."/>
            <person name="Sloan D."/>
            <person name="Song L."/>
            <person name="Wang Q."/>
            <person name="Wang Y."/>
            <person name="Wang Z."/>
            <person name="White J."/>
            <person name="Willingham D."/>
            <person name="Wu H."/>
            <person name="Yao Z."/>
            <person name="Zhan M."/>
            <person name="Zhang G."/>
            <person name="Chissoe S."/>
            <person name="Murray J."/>
            <person name="Miller N."/>
            <person name="Minx P."/>
            <person name="Fulton R."/>
            <person name="Johnson D."/>
            <person name="Bemis G."/>
            <person name="Bentley D."/>
            <person name="Bradshaw H."/>
            <person name="Bourne S."/>
            <person name="Cordes M."/>
            <person name="Du Z."/>
            <person name="Fulton L."/>
            <person name="Goela D."/>
            <person name="Graves T."/>
            <person name="Hawkins J."/>
            <person name="Hinds K."/>
            <person name="Kemp K."/>
            <person name="Latreille P."/>
            <person name="Layman D."/>
            <person name="Ozersky P."/>
            <person name="Rohlfing T."/>
            <person name="Scheet P."/>
            <person name="Walker C."/>
            <person name="Wamsley A."/>
            <person name="Wohldmann P."/>
            <person name="Pepin K."/>
            <person name="Nelson J."/>
            <person name="Korf I."/>
            <person name="Bedell J.A."/>
            <person name="Hillier L.W."/>
            <person name="Mardis E."/>
            <person name="Waterston R."/>
            <person name="Wilson R."/>
            <person name="Emanuel B.S."/>
            <person name="Shaikh T."/>
            <person name="Kurahashi H."/>
            <person name="Saitta S."/>
            <person name="Budarf M.L."/>
            <person name="McDermid H.E."/>
            <person name="Johnson A."/>
            <person name="Wong A.C.C."/>
            <person name="Morrow B.E."/>
            <person name="Edelmann L."/>
            <person name="Kim U.J."/>
            <person name="Shizuya H."/>
            <person name="Simon M.I."/>
            <person name="Dumanski J.P."/>
            <person name="Peyrard M."/>
            <person name="Kedra D."/>
            <person name="Seroussi E."/>
            <person name="Fransson I."/>
            <person name="Tapia I."/>
            <person name="Bruder C.E."/>
            <person name="O'Brien K.P."/>
            <person name="Wilkinson P."/>
            <person name="Bodenteich A."/>
            <person name="Hartman K."/>
            <person name="Hu X."/>
            <person name="Khan A.S."/>
            <person name="Lane L."/>
            <person name="Tilahun Y."/>
            <person name="Wright H."/>
        </authorList>
    </citation>
    <scope>NUCLEOTIDE SEQUENCE [LARGE SCALE GENOMIC DNA]</scope>
</reference>
<reference key="6">
    <citation type="journal article" date="2004" name="Genome Res.">
        <title>The status, quality, and expansion of the NIH full-length cDNA project: the Mammalian Gene Collection (MGC).</title>
        <authorList>
            <consortium name="The MGC Project Team"/>
        </authorList>
    </citation>
    <scope>NUCLEOTIDE SEQUENCE [LARGE SCALE MRNA]</scope>
    <source>
        <tissue>Brain</tissue>
    </source>
</reference>
<reference key="7">
    <citation type="journal article" date="1992" name="J. Biol. Chem.">
        <title>Regulation of the superoxide-generating NADPH oxidase by a small GTP-binding protein and its stimulatory and inhibitory GDP/GTP exchange proteins.</title>
        <authorList>
            <person name="Mizuno T."/>
            <person name="Kaibuchi K."/>
            <person name="Ando S."/>
            <person name="Musha T."/>
            <person name="Hiraoka K."/>
            <person name="Takaishi K."/>
            <person name="Asada M."/>
            <person name="Nunoi H."/>
            <person name="Matsuda I."/>
            <person name="Takai Y."/>
        </authorList>
    </citation>
    <scope>PROTEIN SEQUENCE OF 6-15; 97-107 AND 134-165</scope>
</reference>
<reference key="8">
    <citation type="journal article" date="1991" name="Science">
        <title>Regulation of phagocyte oxygen radical production by the GTP-binding protein Rac 2.</title>
        <authorList>
            <person name="Knaus U.G."/>
            <person name="Heyworth P.G."/>
            <person name="Evans T."/>
            <person name="Curnutte J.T."/>
            <person name="Bokoch G.M."/>
        </authorList>
    </citation>
    <scope>PROTEIN SEQUENCE OF 7-16; 19-49; 154-163 AND 175-183</scope>
    <scope>FUNCTION</scope>
    <source>
        <tissue>Neutrophil</tissue>
    </source>
</reference>
<reference key="9">
    <citation type="journal article" date="1991" name="Biochem. Biophys. Res. Commun.">
        <title>A hemopoietic specific gene encoding a small GTP binding protein is overexpressed during T cell activation.</title>
        <authorList>
            <person name="Reibel L."/>
            <person name="Dorseuil O."/>
            <person name="Stancou R."/>
            <person name="Bertoglio J."/>
            <person name="Gacon G."/>
        </authorList>
    </citation>
    <scope>NUCLEOTIDE SEQUENCE [MRNA] OF 13-192</scope>
</reference>
<reference key="10">
    <citation type="journal article" date="1993" name="Biochemistry">
        <title>Regulation of the human neutrophil NADPH oxidase by rho-related G-proteins.</title>
        <authorList>
            <person name="Kwong C.H."/>
            <person name="Malech H.L."/>
            <person name="Rotrosen D."/>
            <person name="Leto T.L."/>
        </authorList>
    </citation>
    <scope>PROTEIN SEQUENCE OF 97-102 AND 167-174</scope>
    <source>
        <tissue>Neutrophil</tissue>
    </source>
</reference>
<reference key="11">
    <citation type="journal article" date="1991" name="J. Biol. Chem.">
        <title>Carboxyl-terminal isoprenylation of ras-related GTP-binding proteins encoded by rac1, rac2, and ralA.</title>
        <authorList>
            <person name="Kinsella B.T."/>
            <person name="Erdman R.A."/>
            <person name="Maltese W.A."/>
        </authorList>
    </citation>
    <scope>ISOPRENYLATION AT CYS-189</scope>
    <scope>MUTAGENESIS OF CYS-189</scope>
</reference>
<reference key="12">
    <citation type="journal article" date="1999" name="Biochim. Biophys. Acta">
        <title>Non-adherent cell-specific expression of DOCK2, a member of the human CDM-family proteins.</title>
        <authorList>
            <person name="Nishihara H."/>
            <person name="Kobayashi S."/>
            <person name="Hashimoto Y."/>
            <person name="Ohba F."/>
            <person name="Mochizuki N."/>
            <person name="Kurata T."/>
            <person name="Nagashima K."/>
            <person name="Matsuda M."/>
        </authorList>
    </citation>
    <scope>INTERACTION WITH DOCK2</scope>
</reference>
<reference key="13">
    <citation type="journal article" date="2005" name="FASEB J.">
        <title>The arachidonic acid-binding protein S100A8/A9 promotes NADPH oxidase activation by interaction with p67phox and Rac-2.</title>
        <authorList>
            <person name="Kerkhoff C."/>
            <person name="Nacken W."/>
            <person name="Benedyk M."/>
            <person name="Dagher M.C."/>
            <person name="Sopalla C."/>
            <person name="Doussiere J."/>
        </authorList>
    </citation>
    <scope>INTERACTION WITH S100A8 AND CALPROTECTIN</scope>
</reference>
<reference key="14">
    <citation type="journal article" date="2009" name="FASEB J.">
        <title>Regulation of the phagocyte NADPH oxidase activity: phosphorylation of gp91phox/NOX2 by protein kinase C enhances its diaphorase activity and binding to Rac2, p67phox, and p47phox.</title>
        <authorList>
            <person name="Raad H."/>
            <person name="Paclet M.H."/>
            <person name="Boussetta T."/>
            <person name="Kroviarski Y."/>
            <person name="Morel F."/>
            <person name="Quinn M.T."/>
            <person name="Gougerot-Pocidalo M.A."/>
            <person name="Dang P.M."/>
            <person name="El-Benna J."/>
        </authorList>
    </citation>
    <scope>SUBUNIT</scope>
</reference>
<reference key="15">
    <citation type="journal article" date="2009" name="Science">
        <title>Lysine acetylation targets protein complexes and co-regulates major cellular functions.</title>
        <authorList>
            <person name="Choudhary C."/>
            <person name="Kumar C."/>
            <person name="Gnad F."/>
            <person name="Nielsen M.L."/>
            <person name="Rehman M."/>
            <person name="Walther T.C."/>
            <person name="Olsen J.V."/>
            <person name="Mann M."/>
        </authorList>
    </citation>
    <scope>ACETYLATION [LARGE SCALE ANALYSIS] AT LYS-147</scope>
    <scope>IDENTIFICATION BY MASS SPECTROMETRY [LARGE SCALE ANALYSIS]</scope>
</reference>
<reference key="16">
    <citation type="journal article" date="2011" name="BMC Syst. Biol.">
        <title>Initial characterization of the human central proteome.</title>
        <authorList>
            <person name="Burkard T.R."/>
            <person name="Planyavsky M."/>
            <person name="Kaupe I."/>
            <person name="Breitwieser F.P."/>
            <person name="Buerckstuemmer T."/>
            <person name="Bennett K.L."/>
            <person name="Superti-Furga G."/>
            <person name="Colinge J."/>
        </authorList>
    </citation>
    <scope>IDENTIFICATION BY MASS SPECTROMETRY [LARGE SCALE ANALYSIS]</scope>
</reference>
<reference key="17">
    <citation type="journal article" date="2013" name="Nat. Struct. Mol. Biol.">
        <title>A bacterial toxin catalyzing tyrosine glycosylation of Rho and deamidation of Gq and Gi proteins.</title>
        <authorList>
            <person name="Jank T."/>
            <person name="Bogdanovic X."/>
            <person name="Wirth C."/>
            <person name="Haaf E."/>
            <person name="Spoerner M."/>
            <person name="Boehmer K.E."/>
            <person name="Steinemann M."/>
            <person name="Orth J.H."/>
            <person name="Kalbitzer H.R."/>
            <person name="Warscheid B."/>
            <person name="Hunte C."/>
            <person name="Aktories K."/>
        </authorList>
    </citation>
    <scope>GLYCOSYLATION AT TYR-32 (MICROBIAL INFECTION)</scope>
</reference>
<reference key="18">
    <citation type="journal article" date="2015" name="Proteomics">
        <title>N-terminome analysis of the human mitochondrial proteome.</title>
        <authorList>
            <person name="Vaca Jacome A.S."/>
            <person name="Rabilloud T."/>
            <person name="Schaeffer-Reiss C."/>
            <person name="Rompais M."/>
            <person name="Ayoub D."/>
            <person name="Lane L."/>
            <person name="Bairoch A."/>
            <person name="Van Dorsselaer A."/>
            <person name="Carapito C."/>
        </authorList>
    </citation>
    <scope>IDENTIFICATION BY MASS SPECTROMETRY [LARGE SCALE ANALYSIS]</scope>
</reference>
<reference key="19">
    <citation type="journal article" date="2000" name="Nat. Struct. Biol.">
        <title>The Rac-RhoGDI complex and the structural basis for the regulation of Rho proteins by RhoGDI.</title>
        <authorList>
            <person name="Scheffzek K."/>
            <person name="Stephan I."/>
            <person name="Jensen O.N."/>
            <person name="Illenberger D."/>
            <person name="Gierschik P."/>
        </authorList>
    </citation>
    <scope>X-RAY CRYSTALLOGRAPHY (2.35 ANGSTROMS) OF COMPLEX WITH ARHGDIB</scope>
</reference>
<reference key="20">
    <citation type="journal article" date="2000" name="Proc. Natl. Acad. Sci. U.S.A.">
        <title>Human neutrophil immunodeficiency syndrome is associated with an inhibitory Rac2 mutation.</title>
        <authorList>
            <person name="Ambruso D.R."/>
            <person name="Knall C."/>
            <person name="Abell A.N."/>
            <person name="Panepinto J."/>
            <person name="Kurkchubasche A."/>
            <person name="Thurman G."/>
            <person name="Gonzalez-Aller C."/>
            <person name="Hiester A."/>
            <person name="deBoer M."/>
            <person name="Harbeck R.J."/>
            <person name="Oyer R."/>
            <person name="Johnson G.L."/>
            <person name="Roos D."/>
        </authorList>
    </citation>
    <scope>VARIANT IMD73A ASN-57</scope>
</reference>
<reference key="21">
    <citation type="journal article" date="2006" name="Science">
        <title>The consensus coding sequences of human breast and colorectal cancers.</title>
        <authorList>
            <person name="Sjoeblom T."/>
            <person name="Jones S."/>
            <person name="Wood L.D."/>
            <person name="Parsons D.W."/>
            <person name="Lin J."/>
            <person name="Barber T.D."/>
            <person name="Mandelker D."/>
            <person name="Leary R.J."/>
            <person name="Ptak J."/>
            <person name="Silliman N."/>
            <person name="Szabo S."/>
            <person name="Buckhaults P."/>
            <person name="Farrell C."/>
            <person name="Meeh P."/>
            <person name="Markowitz S.D."/>
            <person name="Willis J."/>
            <person name="Dawson D."/>
            <person name="Willson J.K.V."/>
            <person name="Gazdar A.F."/>
            <person name="Hartigan J."/>
            <person name="Wu L."/>
            <person name="Liu C."/>
            <person name="Parmigiani G."/>
            <person name="Park B.H."/>
            <person name="Bachman K.E."/>
            <person name="Papadopoulos N."/>
            <person name="Vogelstein B."/>
            <person name="Kinzler K.W."/>
            <person name="Velculescu V.E."/>
        </authorList>
    </citation>
    <scope>VARIANT [LARGE SCALE ANALYSIS] LEU-29</scope>
</reference>
<reference key="22">
    <citation type="journal article" date="2015" name="J. Allergy Clin. Immunol.">
        <title>RAC2 loss-of-function mutation in 2 siblings with characteristics of common variable immunodeficiency.</title>
        <authorList>
            <person name="Alkhairy O.K."/>
            <person name="Rezaei N."/>
            <person name="Graham R.R."/>
            <person name="Abolhassani H."/>
            <person name="Borte S."/>
            <person name="Hultenby K."/>
            <person name="Wu C."/>
            <person name="Aghamohammadi A."/>
            <person name="Williams D.A."/>
            <person name="Behrens T.W."/>
            <person name="Hammarstroem L."/>
            <person name="Pan-Hammarstroem Q."/>
        </authorList>
    </citation>
    <scope>INVOLVEMENT IN IMD73C</scope>
    <scope>VARIANT IMD73C 56-TRP--LEU-192 DEL</scope>
    <scope>CHARACTERIZATION OF VARIANT IMD73C 56-TRP--LEU-192 DEL</scope>
</reference>
<reference key="23">
    <citation type="journal article" date="2019" name="Blood">
        <title>Dominant activating RAC2 mutation with lymphopenia, immunodeficiency, and cytoskeletal defects.</title>
        <authorList>
            <person name="Hsu A.P."/>
            <person name="Donko A."/>
            <person name="Arrington M.E."/>
            <person name="Swamydas M."/>
            <person name="Fink D."/>
            <person name="Das A."/>
            <person name="Escobedo O."/>
            <person name="Bonagura V."/>
            <person name="Szabolcs P."/>
            <person name="Steinberg H.N."/>
            <person name="Bergerson J."/>
            <person name="Skoskiewicz A."/>
            <person name="Makhija M."/>
            <person name="Davis J."/>
            <person name="Foruraghi L."/>
            <person name="Palmer C."/>
            <person name="Fuleihan R.L."/>
            <person name="Church J.A."/>
            <person name="Bhandoola A."/>
            <person name="Lionakis M.S."/>
            <person name="Campbell S."/>
            <person name="Leto T.L."/>
            <person name="Kuhns D.B."/>
            <person name="Holland S.M."/>
        </authorList>
    </citation>
    <scope>INVOLVEMENT IN IMD73B</scope>
    <scope>VARIANT IMD73B LYS-62</scope>
    <scope>CHARACTERIZATION OF VARIANT IMD73B LYS-62</scope>
    <scope>FUNCTION</scope>
    <scope>CATALYTIC ACTIVITY</scope>
    <scope>ACTIVITY REGULATION</scope>
    <scope>INTERACTION WITH PAK1</scope>
</reference>
<reference key="24">
    <citation type="journal article" date="2019" name="Clin. Immunol.">
        <title>Heterozygous activating mutation in RAC2 causes infantile-onset combined immunodeficiency with susceptibility to viral infections.</title>
        <authorList>
            <person name="Sharapova S.O."/>
            <person name="Haapaniemi E."/>
            <person name="Sakovich I.S."/>
            <person name="Kostyuchenko L.V."/>
            <person name="Donko A."/>
            <person name="Dulau-Florea A."/>
            <person name="Malko O."/>
            <person name="Bondarenko A.V."/>
            <person name="Stegantseva M.V."/>
            <person name="Leto T.L."/>
            <person name="Uygun V."/>
            <person name="Karasu G.T."/>
            <person name="Holland S.M."/>
            <person name="Hsu A.P."/>
            <person name="Aleinikova O.V."/>
        </authorList>
    </citation>
    <scope>INVOLVEMENT IN IMD73B</scope>
    <scope>VARIANT IMD73B THR-92</scope>
    <scope>CHARACTERIZATION OF VARIANT IMD73B THR-92</scope>
</reference>
<reference key="25">
    <citation type="journal article" date="2019" name="J. Allergy Clin. Immunol.">
        <title>A monoallelic activating mutation in RAC2 resulting in a combined immunodeficiency.</title>
        <authorList>
            <person name="Lougaris V."/>
            <person name="Chou J."/>
            <person name="Beano A."/>
            <person name="Wallace J.G."/>
            <person name="Baronio M."/>
            <person name="Gazzurelli L."/>
            <person name="Lorenzini T."/>
            <person name="Moratto D."/>
            <person name="Tabellini G."/>
            <person name="Parolini S."/>
            <person name="Seleman M."/>
            <person name="Stafstrom K."/>
            <person name="Xu H."/>
            <person name="Harris C."/>
            <person name="Geha R.S."/>
            <person name="Plebani A."/>
        </authorList>
    </citation>
    <scope>INVOLVEMENT IN IMD73B</scope>
    <scope>VARIANT IMD73B HIS-34</scope>
    <scope>CHARACTERIZATION OF VARIANT IMD73B HIS-34</scope>
    <scope>INTERACTION WITH PAK1</scope>
</reference>
<reference key="26">
    <citation type="journal article" date="2020" name="Clin. Immunol.">
        <title>A dominant activating RAC2 variant associated with immunodeficiency and pulmonary disease.</title>
        <authorList>
            <person name="Smits B.M."/>
            <person name="Lelieveld P.H.C."/>
            <person name="Ververs F.A."/>
            <person name="Turkenburg M."/>
            <person name="de Koning C."/>
            <person name="van Dijk M."/>
            <person name="Leavis H.L."/>
            <person name="Boelens J.J."/>
            <person name="Lindemans C.A."/>
            <person name="Bloem A.C."/>
            <person name="van de Corput L."/>
            <person name="van Montfrans J."/>
            <person name="Nierkens S."/>
            <person name="van Gijn M.E."/>
            <person name="Geerke D.P."/>
            <person name="Waterham H.R."/>
            <person name="Koenderman L."/>
            <person name="Boes M."/>
        </authorList>
    </citation>
    <scope>INVOLVEMENT IN IMD73B</scope>
    <scope>VARIANT IMD73B LYS-62</scope>
    <scope>CHARACTERIZATION OF VARIANT IMD73B LYS-62</scope>
</reference>
<gene>
    <name evidence="19" type="primary">RAC2</name>
</gene>
<proteinExistence type="evidence at protein level"/>
<dbReference type="EC" id="3.6.5.2" evidence="14"/>
<dbReference type="EMBL" id="M29871">
    <property type="protein sequence ID" value="AAA36538.1"/>
    <property type="molecule type" value="mRNA"/>
</dbReference>
<dbReference type="EMBL" id="AF498965">
    <property type="protein sequence ID" value="AAM21112.1"/>
    <property type="molecule type" value="mRNA"/>
</dbReference>
<dbReference type="EMBL" id="CR456555">
    <property type="protein sequence ID" value="CAG30441.1"/>
    <property type="molecule type" value="mRNA"/>
</dbReference>
<dbReference type="EMBL" id="BT006919">
    <property type="protein sequence ID" value="AAP35565.1"/>
    <property type="molecule type" value="mRNA"/>
</dbReference>
<dbReference type="EMBL" id="Z82188">
    <property type="status" value="NOT_ANNOTATED_CDS"/>
    <property type="molecule type" value="Genomic_DNA"/>
</dbReference>
<dbReference type="EMBL" id="BC001485">
    <property type="protein sequence ID" value="AAH01485.1"/>
    <property type="molecule type" value="mRNA"/>
</dbReference>
<dbReference type="EMBL" id="M64595">
    <property type="protein sequence ID" value="AAA35941.1"/>
    <property type="molecule type" value="mRNA"/>
</dbReference>
<dbReference type="CCDS" id="CCDS13945.1"/>
<dbReference type="PIR" id="B34386">
    <property type="entry name" value="B34386"/>
</dbReference>
<dbReference type="RefSeq" id="NP_002863.1">
    <property type="nucleotide sequence ID" value="NM_002872.5"/>
</dbReference>
<dbReference type="PDB" id="1DS6">
    <property type="method" value="X-ray"/>
    <property type="resolution" value="2.35 A"/>
    <property type="chains" value="A=1-192"/>
</dbReference>
<dbReference type="PDB" id="2W2T">
    <property type="method" value="X-ray"/>
    <property type="resolution" value="1.95 A"/>
    <property type="chains" value="A=2-179"/>
</dbReference>
<dbReference type="PDB" id="2W2V">
    <property type="method" value="X-ray"/>
    <property type="resolution" value="2.00 A"/>
    <property type="chains" value="A/B/C/D=1-177"/>
</dbReference>
<dbReference type="PDB" id="2W2X">
    <property type="method" value="X-ray"/>
    <property type="resolution" value="2.30 A"/>
    <property type="chains" value="A/B=2-179"/>
</dbReference>
<dbReference type="PDBsum" id="1DS6"/>
<dbReference type="PDBsum" id="2W2T"/>
<dbReference type="PDBsum" id="2W2V"/>
<dbReference type="PDBsum" id="2W2X"/>
<dbReference type="SMR" id="P15153"/>
<dbReference type="BioGRID" id="111818">
    <property type="interactions" value="668"/>
</dbReference>
<dbReference type="ComplexPortal" id="CPX-6134">
    <property type="entry name" value="Phagocyte NADPH oxidase complex, RAC2 variant"/>
</dbReference>
<dbReference type="DIP" id="DIP-34291N"/>
<dbReference type="FunCoup" id="P15153">
    <property type="interactions" value="1909"/>
</dbReference>
<dbReference type="IntAct" id="P15153">
    <property type="interactions" value="35"/>
</dbReference>
<dbReference type="MINT" id="P15153"/>
<dbReference type="STRING" id="9606.ENSP00000249071"/>
<dbReference type="BindingDB" id="P15153"/>
<dbReference type="ChEMBL" id="CHEMBL5581"/>
<dbReference type="DrugBank" id="DB00514">
    <property type="generic name" value="Dextromethorphan"/>
</dbReference>
<dbReference type="GlyCosmos" id="P15153">
    <property type="glycosylation" value="3 sites, 1 glycan"/>
</dbReference>
<dbReference type="GlyGen" id="P15153">
    <property type="glycosylation" value="4 sites, 1 O-linked glycan (3 sites)"/>
</dbReference>
<dbReference type="iPTMnet" id="P15153"/>
<dbReference type="PhosphoSitePlus" id="P15153"/>
<dbReference type="SwissPalm" id="P15153"/>
<dbReference type="BioMuta" id="RAC2"/>
<dbReference type="DMDM" id="131806"/>
<dbReference type="jPOST" id="P15153"/>
<dbReference type="MassIVE" id="P15153"/>
<dbReference type="PaxDb" id="9606-ENSP00000249071"/>
<dbReference type="PeptideAtlas" id="P15153"/>
<dbReference type="ProteomicsDB" id="53114"/>
<dbReference type="Pumba" id="P15153"/>
<dbReference type="Antibodypedia" id="25898">
    <property type="antibodies" value="390 antibodies from 34 providers"/>
</dbReference>
<dbReference type="DNASU" id="5880"/>
<dbReference type="Ensembl" id="ENST00000249071.11">
    <property type="protein sequence ID" value="ENSP00000249071.6"/>
    <property type="gene ID" value="ENSG00000128340.16"/>
</dbReference>
<dbReference type="GeneID" id="5880"/>
<dbReference type="KEGG" id="hsa:5880"/>
<dbReference type="MANE-Select" id="ENST00000249071.11">
    <property type="protein sequence ID" value="ENSP00000249071.6"/>
    <property type="RefSeq nucleotide sequence ID" value="NM_002872.5"/>
    <property type="RefSeq protein sequence ID" value="NP_002863.1"/>
</dbReference>
<dbReference type="UCSC" id="uc003arc.5">
    <property type="organism name" value="human"/>
</dbReference>
<dbReference type="AGR" id="HGNC:9802"/>
<dbReference type="CTD" id="5880"/>
<dbReference type="DisGeNET" id="5880"/>
<dbReference type="GeneCards" id="RAC2"/>
<dbReference type="HGNC" id="HGNC:9802">
    <property type="gene designation" value="RAC2"/>
</dbReference>
<dbReference type="HPA" id="ENSG00000128340">
    <property type="expression patterns" value="Group enriched (bone marrow, lymphoid tissue)"/>
</dbReference>
<dbReference type="MalaCards" id="RAC2"/>
<dbReference type="MIM" id="602049">
    <property type="type" value="gene"/>
</dbReference>
<dbReference type="MIM" id="608203">
    <property type="type" value="phenotype"/>
</dbReference>
<dbReference type="MIM" id="618986">
    <property type="type" value="phenotype"/>
</dbReference>
<dbReference type="MIM" id="618987">
    <property type="type" value="phenotype"/>
</dbReference>
<dbReference type="neXtProt" id="NX_P15153"/>
<dbReference type="OpenTargets" id="ENSG00000128340"/>
<dbReference type="Orphanet" id="183707">
    <property type="disease" value="Infantile LAD-like disease due to RAC2 deficiency"/>
</dbReference>
<dbReference type="Orphanet" id="692812">
    <property type="disease" value="RAC2-related combined immunodeficiency-bronchiectasis-cancer-predisposing syndrome"/>
</dbReference>
<dbReference type="Orphanet" id="688543">
    <property type="disease" value="Reticular dysgenesis-like severe combined immunodeficiency"/>
</dbReference>
<dbReference type="PharmGKB" id="PA34163"/>
<dbReference type="VEuPathDB" id="HostDB:ENSG00000128340"/>
<dbReference type="eggNOG" id="KOG0393">
    <property type="taxonomic scope" value="Eukaryota"/>
</dbReference>
<dbReference type="GeneTree" id="ENSGT00940000155205"/>
<dbReference type="InParanoid" id="P15153"/>
<dbReference type="OMA" id="KCCCSIF"/>
<dbReference type="OrthoDB" id="8830751at2759"/>
<dbReference type="PAN-GO" id="P15153">
    <property type="GO annotations" value="18 GO annotations based on evolutionary models"/>
</dbReference>
<dbReference type="PhylomeDB" id="P15153"/>
<dbReference type="TreeFam" id="TF101109"/>
<dbReference type="BRENDA" id="3.6.5.2">
    <property type="organism ID" value="2681"/>
</dbReference>
<dbReference type="PathwayCommons" id="P15153"/>
<dbReference type="Reactome" id="R-HSA-114604">
    <property type="pathway name" value="GPVI-mediated activation cascade"/>
</dbReference>
<dbReference type="Reactome" id="R-HSA-1222556">
    <property type="pathway name" value="ROS and RNS production in phagocytes"/>
</dbReference>
<dbReference type="Reactome" id="R-HSA-1257604">
    <property type="pathway name" value="PIP3 activates AKT signaling"/>
</dbReference>
<dbReference type="Reactome" id="R-HSA-2219530">
    <property type="pathway name" value="Constitutive Signaling by Aberrant PI3K in Cancer"/>
</dbReference>
<dbReference type="Reactome" id="R-HSA-4086400">
    <property type="pathway name" value="PCP/CE pathway"/>
</dbReference>
<dbReference type="Reactome" id="R-HSA-5668599">
    <property type="pathway name" value="RHO GTPases Activate NADPH Oxidases"/>
</dbReference>
<dbReference type="Reactome" id="R-HSA-6811558">
    <property type="pathway name" value="PI5P, PP2A and IER3 Regulate PI3K/AKT Signaling"/>
</dbReference>
<dbReference type="Reactome" id="R-HSA-9013404">
    <property type="pathway name" value="RAC2 GTPase cycle"/>
</dbReference>
<dbReference type="SignaLink" id="P15153"/>
<dbReference type="SIGNOR" id="P15153"/>
<dbReference type="BioGRID-ORCS" id="5880">
    <property type="hits" value="32 hits in 1163 CRISPR screens"/>
</dbReference>
<dbReference type="ChiTaRS" id="RAC2">
    <property type="organism name" value="human"/>
</dbReference>
<dbReference type="EvolutionaryTrace" id="P15153"/>
<dbReference type="GeneWiki" id="RAC2"/>
<dbReference type="GenomeRNAi" id="5880"/>
<dbReference type="Pharos" id="P15153">
    <property type="development level" value="Tbio"/>
</dbReference>
<dbReference type="PRO" id="PR:P15153"/>
<dbReference type="Proteomes" id="UP000005640">
    <property type="component" value="Chromosome 22"/>
</dbReference>
<dbReference type="RNAct" id="P15153">
    <property type="molecule type" value="protein"/>
</dbReference>
<dbReference type="Bgee" id="ENSG00000128340">
    <property type="expression patterns" value="Expressed in granulocyte and 167 other cell types or tissues"/>
</dbReference>
<dbReference type="ExpressionAtlas" id="P15153">
    <property type="expression patterns" value="baseline and differential"/>
</dbReference>
<dbReference type="GO" id="GO:0042995">
    <property type="term" value="C:cell projection"/>
    <property type="evidence" value="ECO:0000318"/>
    <property type="project" value="GO_Central"/>
</dbReference>
<dbReference type="GO" id="GO:0031410">
    <property type="term" value="C:cytoplasmic vesicle"/>
    <property type="evidence" value="ECO:0000318"/>
    <property type="project" value="GO_Central"/>
</dbReference>
<dbReference type="GO" id="GO:0005856">
    <property type="term" value="C:cytoskeleton"/>
    <property type="evidence" value="ECO:0000318"/>
    <property type="project" value="GO_Central"/>
</dbReference>
<dbReference type="GO" id="GO:0005829">
    <property type="term" value="C:cytosol"/>
    <property type="evidence" value="ECO:0000314"/>
    <property type="project" value="UniProtKB"/>
</dbReference>
<dbReference type="GO" id="GO:0005789">
    <property type="term" value="C:endoplasmic reticulum membrane"/>
    <property type="evidence" value="ECO:0000304"/>
    <property type="project" value="Reactome"/>
</dbReference>
<dbReference type="GO" id="GO:0070062">
    <property type="term" value="C:extracellular exosome"/>
    <property type="evidence" value="ECO:0007005"/>
    <property type="project" value="UniProtKB"/>
</dbReference>
<dbReference type="GO" id="GO:0005925">
    <property type="term" value="C:focal adhesion"/>
    <property type="evidence" value="ECO:0007005"/>
    <property type="project" value="UniProtKB"/>
</dbReference>
<dbReference type="GO" id="GO:0030027">
    <property type="term" value="C:lamellipodium"/>
    <property type="evidence" value="ECO:0000314"/>
    <property type="project" value="UniProtKB"/>
</dbReference>
<dbReference type="GO" id="GO:0005741">
    <property type="term" value="C:mitochondrial outer membrane"/>
    <property type="evidence" value="ECO:0000304"/>
    <property type="project" value="Reactome"/>
</dbReference>
<dbReference type="GO" id="GO:0043020">
    <property type="term" value="C:NADPH oxidase complex"/>
    <property type="evidence" value="ECO:0000314"/>
    <property type="project" value="UniProtKB"/>
</dbReference>
<dbReference type="GO" id="GO:0005635">
    <property type="term" value="C:nuclear envelope"/>
    <property type="evidence" value="ECO:0007669"/>
    <property type="project" value="Ensembl"/>
</dbReference>
<dbReference type="GO" id="GO:0030670">
    <property type="term" value="C:phagocytic vesicle membrane"/>
    <property type="evidence" value="ECO:0000304"/>
    <property type="project" value="Reactome"/>
</dbReference>
<dbReference type="GO" id="GO:0005886">
    <property type="term" value="C:plasma membrane"/>
    <property type="evidence" value="ECO:0000318"/>
    <property type="project" value="GO_Central"/>
</dbReference>
<dbReference type="GO" id="GO:0005525">
    <property type="term" value="F:GTP binding"/>
    <property type="evidence" value="ECO:0000315"/>
    <property type="project" value="UniProtKB"/>
</dbReference>
<dbReference type="GO" id="GO:0003924">
    <property type="term" value="F:GTPase activity"/>
    <property type="evidence" value="ECO:0000318"/>
    <property type="project" value="GO_Central"/>
</dbReference>
<dbReference type="GO" id="GO:0019901">
    <property type="term" value="F:protein kinase binding"/>
    <property type="evidence" value="ECO:0000318"/>
    <property type="project" value="GO_Central"/>
</dbReference>
<dbReference type="GO" id="GO:0019887">
    <property type="term" value="F:protein kinase regulator activity"/>
    <property type="evidence" value="ECO:0007669"/>
    <property type="project" value="Ensembl"/>
</dbReference>
<dbReference type="GO" id="GO:0007015">
    <property type="term" value="P:actin filament organization"/>
    <property type="evidence" value="ECO:0000315"/>
    <property type="project" value="UniProtKB"/>
</dbReference>
<dbReference type="GO" id="GO:0045453">
    <property type="term" value="P:bone resorption"/>
    <property type="evidence" value="ECO:0007669"/>
    <property type="project" value="Ensembl"/>
</dbReference>
<dbReference type="GO" id="GO:0030031">
    <property type="term" value="P:cell projection assembly"/>
    <property type="evidence" value="ECO:0007669"/>
    <property type="project" value="Ensembl"/>
</dbReference>
<dbReference type="GO" id="GO:0006935">
    <property type="term" value="P:chemotaxis"/>
    <property type="evidence" value="ECO:0000318"/>
    <property type="project" value="GO_Central"/>
</dbReference>
<dbReference type="GO" id="GO:0030865">
    <property type="term" value="P:cortical cytoskeleton organization"/>
    <property type="evidence" value="ECO:0000318"/>
    <property type="project" value="GO_Central"/>
</dbReference>
<dbReference type="GO" id="GO:0043131">
    <property type="term" value="P:erythrocyte enucleation"/>
    <property type="evidence" value="ECO:0007669"/>
    <property type="project" value="Ensembl"/>
</dbReference>
<dbReference type="GO" id="GO:0007163">
    <property type="term" value="P:establishment or maintenance of cell polarity"/>
    <property type="evidence" value="ECO:0000318"/>
    <property type="project" value="GO_Central"/>
</dbReference>
<dbReference type="GO" id="GO:0007186">
    <property type="term" value="P:G protein-coupled receptor signaling pathway"/>
    <property type="evidence" value="ECO:0007669"/>
    <property type="project" value="Ensembl"/>
</dbReference>
<dbReference type="GO" id="GO:0071593">
    <property type="term" value="P:lymphocyte aggregation"/>
    <property type="evidence" value="ECO:0000315"/>
    <property type="project" value="UniProtKB"/>
</dbReference>
<dbReference type="GO" id="GO:0070662">
    <property type="term" value="P:mast cell proliferation"/>
    <property type="evidence" value="ECO:0007669"/>
    <property type="project" value="Ensembl"/>
</dbReference>
<dbReference type="GO" id="GO:0010592">
    <property type="term" value="P:positive regulation of lamellipodium assembly"/>
    <property type="evidence" value="ECO:0000315"/>
    <property type="project" value="UniProtKB"/>
</dbReference>
<dbReference type="GO" id="GO:0070668">
    <property type="term" value="P:positive regulation of mast cell proliferation"/>
    <property type="evidence" value="ECO:0007669"/>
    <property type="project" value="Ensembl"/>
</dbReference>
<dbReference type="GO" id="GO:0090023">
    <property type="term" value="P:positive regulation of neutrophil chemotaxis"/>
    <property type="evidence" value="ECO:0000315"/>
    <property type="project" value="UniProtKB"/>
</dbReference>
<dbReference type="GO" id="GO:1903955">
    <property type="term" value="P:positive regulation of protein targeting to mitochondrion"/>
    <property type="evidence" value="ECO:0007001"/>
    <property type="project" value="ParkinsonsUK-UCL"/>
</dbReference>
<dbReference type="GO" id="GO:0032956">
    <property type="term" value="P:regulation of actin cytoskeleton organization"/>
    <property type="evidence" value="ECO:0000318"/>
    <property type="project" value="GO_Central"/>
</dbReference>
<dbReference type="GO" id="GO:0008360">
    <property type="term" value="P:regulation of cell shape"/>
    <property type="evidence" value="ECO:0000318"/>
    <property type="project" value="GO_Central"/>
</dbReference>
<dbReference type="GO" id="GO:0010810">
    <property type="term" value="P:regulation of cell-substrate adhesion"/>
    <property type="evidence" value="ECO:0000315"/>
    <property type="project" value="UniProtKB"/>
</dbReference>
<dbReference type="GO" id="GO:0010310">
    <property type="term" value="P:regulation of hydrogen peroxide metabolic process"/>
    <property type="evidence" value="ECO:0000304"/>
    <property type="project" value="BHF-UCL"/>
</dbReference>
<dbReference type="GO" id="GO:0060753">
    <property type="term" value="P:regulation of mast cell chemotaxis"/>
    <property type="evidence" value="ECO:0007669"/>
    <property type="project" value="Ensembl"/>
</dbReference>
<dbReference type="GO" id="GO:0043304">
    <property type="term" value="P:regulation of mast cell degranulation"/>
    <property type="evidence" value="ECO:0007669"/>
    <property type="project" value="Ensembl"/>
</dbReference>
<dbReference type="GO" id="GO:1902622">
    <property type="term" value="P:regulation of neutrophil migration"/>
    <property type="evidence" value="ECO:0000315"/>
    <property type="project" value="UniProtKB"/>
</dbReference>
<dbReference type="GO" id="GO:0060263">
    <property type="term" value="P:regulation of respiratory burst"/>
    <property type="evidence" value="ECO:0000314"/>
    <property type="project" value="BHF-UCL"/>
</dbReference>
<dbReference type="GO" id="GO:0042129">
    <property type="term" value="P:regulation of T cell proliferation"/>
    <property type="evidence" value="ECO:0007669"/>
    <property type="project" value="Ensembl"/>
</dbReference>
<dbReference type="GO" id="GO:0045730">
    <property type="term" value="P:respiratory burst"/>
    <property type="evidence" value="ECO:0000303"/>
    <property type="project" value="ComplexPortal"/>
</dbReference>
<dbReference type="GO" id="GO:0007165">
    <property type="term" value="P:signal transduction"/>
    <property type="evidence" value="ECO:0000318"/>
    <property type="project" value="GO_Central"/>
</dbReference>
<dbReference type="GO" id="GO:0007264">
    <property type="term" value="P:small GTPase-mediated signal transduction"/>
    <property type="evidence" value="ECO:0007669"/>
    <property type="project" value="InterPro"/>
</dbReference>
<dbReference type="GO" id="GO:0042554">
    <property type="term" value="P:superoxide anion generation"/>
    <property type="evidence" value="ECO:0000314"/>
    <property type="project" value="UniProtKB"/>
</dbReference>
<dbReference type="CDD" id="cd01871">
    <property type="entry name" value="Rac1_like"/>
    <property type="match status" value="1"/>
</dbReference>
<dbReference type="FunFam" id="3.40.50.300:FF:000088">
    <property type="entry name" value="Ras-related C3 botulinum toxin substrate 1"/>
    <property type="match status" value="1"/>
</dbReference>
<dbReference type="Gene3D" id="3.40.50.300">
    <property type="entry name" value="P-loop containing nucleotide triphosphate hydrolases"/>
    <property type="match status" value="1"/>
</dbReference>
<dbReference type="InterPro" id="IPR027417">
    <property type="entry name" value="P-loop_NTPase"/>
</dbReference>
<dbReference type="InterPro" id="IPR005225">
    <property type="entry name" value="Small_GTP-bd"/>
</dbReference>
<dbReference type="InterPro" id="IPR001806">
    <property type="entry name" value="Small_GTPase"/>
</dbReference>
<dbReference type="InterPro" id="IPR003578">
    <property type="entry name" value="Small_GTPase_Rho"/>
</dbReference>
<dbReference type="NCBIfam" id="TIGR00231">
    <property type="entry name" value="small_GTP"/>
    <property type="match status" value="1"/>
</dbReference>
<dbReference type="PANTHER" id="PTHR24072">
    <property type="entry name" value="RHO FAMILY GTPASE"/>
    <property type="match status" value="1"/>
</dbReference>
<dbReference type="Pfam" id="PF00071">
    <property type="entry name" value="Ras"/>
    <property type="match status" value="1"/>
</dbReference>
<dbReference type="PRINTS" id="PR00449">
    <property type="entry name" value="RASTRNSFRMNG"/>
</dbReference>
<dbReference type="SMART" id="SM00175">
    <property type="entry name" value="RAB"/>
    <property type="match status" value="1"/>
</dbReference>
<dbReference type="SMART" id="SM00176">
    <property type="entry name" value="RAN"/>
    <property type="match status" value="1"/>
</dbReference>
<dbReference type="SMART" id="SM00173">
    <property type="entry name" value="RAS"/>
    <property type="match status" value="1"/>
</dbReference>
<dbReference type="SMART" id="SM00174">
    <property type="entry name" value="RHO"/>
    <property type="match status" value="1"/>
</dbReference>
<dbReference type="SUPFAM" id="SSF52540">
    <property type="entry name" value="P-loop containing nucleoside triphosphate hydrolases"/>
    <property type="match status" value="1"/>
</dbReference>
<dbReference type="PROSITE" id="PS51420">
    <property type="entry name" value="RHO"/>
    <property type="match status" value="1"/>
</dbReference>
<accession>P15153</accession>
<accession>Q9UDJ4</accession>
<sequence length="192" mass="21429">MQAIKCVVVGDGAVGKTCLLISYTTNAFPGEYIPTVFDNYSANVMVDSKPVNLGLWDTAGQEDYDRLRPLSYPQTDVFLICFSLVSPASYENVRAKWFPEVRHHCPSTPIILVGTKLDLRDDKDTIEKLKEKKLAPITYPQGLALAKEIDSVKYLECSALTQRGLKTVFDEAIRAVLCPQPTRQQKRACSLL</sequence>
<feature type="chain" id="PRO_0000042046" description="Ras-related C3 botulinum toxin substrate 2">
    <location>
        <begin position="1"/>
        <end position="189"/>
    </location>
</feature>
<feature type="propeptide" id="PRO_0000042047" description="Removed in mature form" evidence="1">
    <location>
        <begin position="190"/>
        <end position="192"/>
    </location>
</feature>
<feature type="short sequence motif" description="Effector region" evidence="3">
    <location>
        <begin position="32"/>
        <end position="40"/>
    </location>
</feature>
<feature type="binding site" evidence="1">
    <location>
        <begin position="10"/>
        <end position="17"/>
    </location>
    <ligand>
        <name>GTP</name>
        <dbReference type="ChEBI" id="CHEBI:37565"/>
    </ligand>
</feature>
<feature type="binding site" evidence="1">
    <location>
        <begin position="57"/>
        <end position="61"/>
    </location>
    <ligand>
        <name>GTP</name>
        <dbReference type="ChEBI" id="CHEBI:37565"/>
    </ligand>
</feature>
<feature type="binding site" evidence="1">
    <location>
        <begin position="115"/>
        <end position="118"/>
    </location>
    <ligand>
        <name>GTP</name>
        <dbReference type="ChEBI" id="CHEBI:37565"/>
    </ligand>
</feature>
<feature type="modified residue" description="ADP-ribosylasparagine; by botulinum toxin" evidence="1">
    <location>
        <position position="39"/>
    </location>
</feature>
<feature type="modified residue" description="N6-acetyllysine" evidence="20">
    <location>
        <position position="147"/>
    </location>
</feature>
<feature type="modified residue" description="Cysteine methyl ester" evidence="1">
    <location>
        <position position="189"/>
    </location>
</feature>
<feature type="lipid moiety-binding region" description="S-geranylgeranyl cysteine" evidence="10">
    <location>
        <position position="189"/>
    </location>
</feature>
<feature type="glycosylation site" description="O-linked (GlcNAc) tyrosine; by Photorhabdus PAU_02230" evidence="11">
    <location>
        <position position="32"/>
    </location>
</feature>
<feature type="sequence variant" id="VAR_036569" description="In a breast cancer sample; somatic mutation." evidence="8">
    <original>P</original>
    <variation>L</variation>
    <location>
        <position position="29"/>
    </location>
</feature>
<feature type="sequence variant" id="VAR_085472" description="In IMD73B; uncertain significance; increased interaction with PAK1 compared to wild-type; potential gain-of-function variant; dbSNP:rs1927393826." evidence="13">
    <original>P</original>
    <variation>H</variation>
    <location>
        <position position="34"/>
    </location>
</feature>
<feature type="sequence variant" id="VAR_085473" description="In IMD73C; strong decrease in protein expression." evidence="12">
    <location>
        <begin position="56"/>
        <end position="192"/>
    </location>
</feature>
<feature type="sequence variant" id="VAR_017452" description="In IMD73A; dominant-negative mutant; binds GDP, but not GTP; inhibits oxidase activation and superoxide anion production in vitro; dbSNP:rs74315507." evidence="5">
    <original>D</original>
    <variation>N</variation>
    <location>
        <position position="57"/>
    </location>
</feature>
<feature type="sequence variant" id="VAR_085474" description="In IMD73B; gain-of-function variant; exhibits impaired GAP-mediated GTP hydrolysis, resulting in sustained GTP association and prolonged RAC2-driven activation of downstream effectors; when transfected into cells, shows increased basal reactive oxygen species production following stimulation by PMA compared to cells transfected with wild-type; increased interaction with PAK1, compared to wild-type; dbSNP:rs1555908409." evidence="14 16">
    <original>E</original>
    <variation>K</variation>
    <location>
        <position position="62"/>
    </location>
</feature>
<feature type="sequence variant" id="VAR_085475" description="In IMD73B; uncertain significance; cells transfected with this variant show higher production of reactive oxygen species compared to wild-type; potential gain-of-function variant; dbSNP:rs1927078072." evidence="15">
    <original>N</original>
    <variation>T</variation>
    <location>
        <position position="92"/>
    </location>
</feature>
<feature type="mutagenesis site" description="Abolishes in vitro prenylation." evidence="10">
    <original>C</original>
    <variation>W</variation>
    <location>
        <position position="189"/>
    </location>
</feature>
<feature type="strand" evidence="21">
    <location>
        <begin position="3"/>
        <end position="11"/>
    </location>
</feature>
<feature type="helix" evidence="21">
    <location>
        <begin position="16"/>
        <end position="25"/>
    </location>
</feature>
<feature type="strand" evidence="21">
    <location>
        <begin position="39"/>
        <end position="46"/>
    </location>
</feature>
<feature type="strand" evidence="21">
    <location>
        <begin position="49"/>
        <end position="56"/>
    </location>
</feature>
<feature type="helix" evidence="21">
    <location>
        <begin position="62"/>
        <end position="64"/>
    </location>
</feature>
<feature type="turn" evidence="21">
    <location>
        <begin position="65"/>
        <end position="67"/>
    </location>
</feature>
<feature type="helix" evidence="21">
    <location>
        <begin position="68"/>
        <end position="71"/>
    </location>
</feature>
<feature type="strand" evidence="21">
    <location>
        <begin position="77"/>
        <end position="83"/>
    </location>
</feature>
<feature type="helix" evidence="21">
    <location>
        <begin position="87"/>
        <end position="95"/>
    </location>
</feature>
<feature type="helix" evidence="21">
    <location>
        <begin position="97"/>
        <end position="104"/>
    </location>
</feature>
<feature type="strand" evidence="21">
    <location>
        <begin position="106"/>
        <end position="108"/>
    </location>
</feature>
<feature type="strand" evidence="21">
    <location>
        <begin position="110"/>
        <end position="115"/>
    </location>
</feature>
<feature type="helix" evidence="21">
    <location>
        <begin position="117"/>
        <end position="119"/>
    </location>
</feature>
<feature type="helix" evidence="21">
    <location>
        <begin position="123"/>
        <end position="130"/>
    </location>
</feature>
<feature type="turn" evidence="21">
    <location>
        <begin position="131"/>
        <end position="133"/>
    </location>
</feature>
<feature type="helix" evidence="21">
    <location>
        <begin position="139"/>
        <end position="149"/>
    </location>
</feature>
<feature type="strand" evidence="21">
    <location>
        <begin position="152"/>
        <end position="156"/>
    </location>
</feature>
<feature type="turn" evidence="21">
    <location>
        <begin position="159"/>
        <end position="161"/>
    </location>
</feature>
<feature type="helix" evidence="21">
    <location>
        <begin position="165"/>
        <end position="175"/>
    </location>
</feature>
<name>RAC2_HUMAN</name>